<organism>
    <name type="scientific">Homo sapiens</name>
    <name type="common">Human</name>
    <dbReference type="NCBI Taxonomy" id="9606"/>
    <lineage>
        <taxon>Eukaryota</taxon>
        <taxon>Metazoa</taxon>
        <taxon>Chordata</taxon>
        <taxon>Craniata</taxon>
        <taxon>Vertebrata</taxon>
        <taxon>Euteleostomi</taxon>
        <taxon>Mammalia</taxon>
        <taxon>Eutheria</taxon>
        <taxon>Euarchontoglires</taxon>
        <taxon>Primates</taxon>
        <taxon>Haplorrhini</taxon>
        <taxon>Catarrhini</taxon>
        <taxon>Hominidae</taxon>
        <taxon>Homo</taxon>
    </lineage>
</organism>
<protein>
    <recommendedName>
        <fullName>Galactose-3-O-sulfotransferase 2</fullName>
        <shortName>Gal3ST-2</shortName>
        <ecNumber>2.8.2.-</ecNumber>
    </recommendedName>
    <alternativeName>
        <fullName>Beta-galactose-3-O-sulfotransferase 2</fullName>
    </alternativeName>
    <alternativeName>
        <fullName>Gal-beta-1, 3-GalNAc 3'-sulfotransferase 2</fullName>
    </alternativeName>
    <alternativeName>
        <fullName>Glycoprotein beta-Gal 3'-sulfotransferase 2</fullName>
    </alternativeName>
</protein>
<comment type="function">
    <text>Transfers a sulfate group to the hydroxyl group at C3 of non-reducing beta-galactosyl residues. Acts both on type 1 (Gal-beta-1,3-GlcNAc) and type 2 (Gal-beta-1,4-GlcNAc) chains with similar efficiency.</text>
</comment>
<comment type="activity regulation">
    <text evidence="2">Strongly inhibited by Cu(2+) and Zn(2+).</text>
</comment>
<comment type="biophysicochemical properties">
    <phDependence>
        <text>Optimum pH is 6.0-6.5.</text>
    </phDependence>
</comment>
<comment type="pathway">
    <text>Protein modification; carbohydrate sulfation.</text>
</comment>
<comment type="interaction">
    <interactant intactId="EBI-10306373">
        <id>Q9H3Q3</id>
    </interactant>
    <interactant intactId="EBI-742948">
        <id>Q5JR59</id>
        <label>MTUS2</label>
    </interactant>
    <organismsDiffer>false</organismsDiffer>
    <experiments>3</experiments>
</comment>
<comment type="subcellular location">
    <subcellularLocation>
        <location evidence="5">Golgi apparatus</location>
        <location evidence="5">Golgi stack membrane</location>
        <topology evidence="5">Single-pass type II membrane protein</topology>
    </subcellularLocation>
</comment>
<comment type="tissue specificity">
    <text evidence="2">Ubiquitous. Detected in heart, stomach, colon, liver and spleen, in epithelial cells lining the lower to middle layer of the crypts in colonic mucosa, hepatocytes surrounding the central vein of the liver, extravillous cytotrophoblasts in the basal plate of the septum of the placenta, renal tubules of the kidney, and neuronal cells of the cerebral cortex.</text>
</comment>
<comment type="similarity">
    <text evidence="4">Belongs to the galactose-3-O-sulfotransferase family.</text>
</comment>
<evidence type="ECO:0000255" key="1"/>
<evidence type="ECO:0000269" key="2">
    <source>
    </source>
</evidence>
<evidence type="ECO:0000269" key="3">
    <source>
    </source>
</evidence>
<evidence type="ECO:0000305" key="4"/>
<evidence type="ECO:0000305" key="5">
    <source>
    </source>
</evidence>
<keyword id="KW-0325">Glycoprotein</keyword>
<keyword id="KW-0333">Golgi apparatus</keyword>
<keyword id="KW-0472">Membrane</keyword>
<keyword id="KW-1267">Proteomics identification</keyword>
<keyword id="KW-1185">Reference proteome</keyword>
<keyword id="KW-0735">Signal-anchor</keyword>
<keyword id="KW-0808">Transferase</keyword>
<keyword id="KW-0812">Transmembrane</keyword>
<keyword id="KW-1133">Transmembrane helix</keyword>
<proteinExistence type="evidence at protein level"/>
<feature type="chain" id="PRO_0000085203" description="Galactose-3-O-sulfotransferase 2">
    <location>
        <begin position="1"/>
        <end position="398"/>
    </location>
</feature>
<feature type="topological domain" description="Cytoplasmic" evidence="1">
    <location>
        <begin position="1"/>
        <end position="10"/>
    </location>
</feature>
<feature type="transmembrane region" description="Helical; Signal-anchor for type II membrane protein" evidence="1">
    <location>
        <begin position="11"/>
        <end position="31"/>
    </location>
</feature>
<feature type="topological domain" description="Lumenal" evidence="1">
    <location>
        <begin position="32"/>
        <end position="398"/>
    </location>
</feature>
<feature type="glycosylation site" description="N-linked (GlcNAc...) asparagine" evidence="1">
    <location>
        <position position="79"/>
    </location>
</feature>
<feature type="glycosylation site" description="N-linked (GlcNAc...) asparagine" evidence="1">
    <location>
        <position position="132"/>
    </location>
</feature>
<feature type="glycosylation site" description="N-linked (GlcNAc...) asparagine" evidence="1">
    <location>
        <position position="179"/>
    </location>
</feature>
<feature type="glycosylation site" description="N-linked (GlcNAc...) asparagine" evidence="1">
    <location>
        <position position="287"/>
    </location>
</feature>
<feature type="glycosylation site" description="N-linked (GlcNAc...) asparagine" evidence="1">
    <location>
        <position position="330"/>
    </location>
</feature>
<feature type="glycosylation site" description="N-linked (GlcNAc...) asparagine" evidence="1">
    <location>
        <position position="360"/>
    </location>
</feature>
<feature type="sequence variant" id="VAR_047060" description="In dbSNP:rs12469459." evidence="2 3">
    <original>M</original>
    <variation>L</variation>
    <location>
        <position position="4"/>
    </location>
</feature>
<gene>
    <name type="primary">GAL3ST2</name>
    <name type="synonym">GP3ST</name>
</gene>
<reference key="1">
    <citation type="journal article" date="2001" name="J. Biol. Chem.">
        <title>Molecular cloning and characterization of a human beta-Gal-3'-sulfotransferase that acts on both type 1 and type 2 (Galbeta 1-3/1-4GlcNAc-R) oligosaccharides.</title>
        <authorList>
            <person name="Honke K."/>
            <person name="Tsuda M."/>
            <person name="Koyota S."/>
            <person name="Wada Y."/>
            <person name="Iida-Tanaka N."/>
            <person name="Ishizuka I."/>
            <person name="Nakayama J."/>
            <person name="Taniguchi N."/>
        </authorList>
    </citation>
    <scope>NUCLEOTIDE SEQUENCE [MRNA]</scope>
    <scope>SUBCELLULAR LOCATION</scope>
    <scope>TISSUE SPECIFICITY</scope>
    <scope>ACTIVITY REGULATION</scope>
    <scope>VARIANT LEU-4</scope>
    <source>
        <tissue>Colon</tissue>
    </source>
</reference>
<reference key="2">
    <citation type="journal article" date="2005" name="Nature">
        <title>Generation and annotation of the DNA sequences of human chromosomes 2 and 4.</title>
        <authorList>
            <person name="Hillier L.W."/>
            <person name="Graves T.A."/>
            <person name="Fulton R.S."/>
            <person name="Fulton L.A."/>
            <person name="Pepin K.H."/>
            <person name="Minx P."/>
            <person name="Wagner-McPherson C."/>
            <person name="Layman D."/>
            <person name="Wylie K."/>
            <person name="Sekhon M."/>
            <person name="Becker M.C."/>
            <person name="Fewell G.A."/>
            <person name="Delehaunty K.D."/>
            <person name="Miner T.L."/>
            <person name="Nash W.E."/>
            <person name="Kremitzki C."/>
            <person name="Oddy L."/>
            <person name="Du H."/>
            <person name="Sun H."/>
            <person name="Bradshaw-Cordum H."/>
            <person name="Ali J."/>
            <person name="Carter J."/>
            <person name="Cordes M."/>
            <person name="Harris A."/>
            <person name="Isak A."/>
            <person name="van Brunt A."/>
            <person name="Nguyen C."/>
            <person name="Du F."/>
            <person name="Courtney L."/>
            <person name="Kalicki J."/>
            <person name="Ozersky P."/>
            <person name="Abbott S."/>
            <person name="Armstrong J."/>
            <person name="Belter E.A."/>
            <person name="Caruso L."/>
            <person name="Cedroni M."/>
            <person name="Cotton M."/>
            <person name="Davidson T."/>
            <person name="Desai A."/>
            <person name="Elliott G."/>
            <person name="Erb T."/>
            <person name="Fronick C."/>
            <person name="Gaige T."/>
            <person name="Haakenson W."/>
            <person name="Haglund K."/>
            <person name="Holmes A."/>
            <person name="Harkins R."/>
            <person name="Kim K."/>
            <person name="Kruchowski S.S."/>
            <person name="Strong C.M."/>
            <person name="Grewal N."/>
            <person name="Goyea E."/>
            <person name="Hou S."/>
            <person name="Levy A."/>
            <person name="Martinka S."/>
            <person name="Mead K."/>
            <person name="McLellan M.D."/>
            <person name="Meyer R."/>
            <person name="Randall-Maher J."/>
            <person name="Tomlinson C."/>
            <person name="Dauphin-Kohlberg S."/>
            <person name="Kozlowicz-Reilly A."/>
            <person name="Shah N."/>
            <person name="Swearengen-Shahid S."/>
            <person name="Snider J."/>
            <person name="Strong J.T."/>
            <person name="Thompson J."/>
            <person name="Yoakum M."/>
            <person name="Leonard S."/>
            <person name="Pearman C."/>
            <person name="Trani L."/>
            <person name="Radionenko M."/>
            <person name="Waligorski J.E."/>
            <person name="Wang C."/>
            <person name="Rock S.M."/>
            <person name="Tin-Wollam A.-M."/>
            <person name="Maupin R."/>
            <person name="Latreille P."/>
            <person name="Wendl M.C."/>
            <person name="Yang S.-P."/>
            <person name="Pohl C."/>
            <person name="Wallis J.W."/>
            <person name="Spieth J."/>
            <person name="Bieri T.A."/>
            <person name="Berkowicz N."/>
            <person name="Nelson J.O."/>
            <person name="Osborne J."/>
            <person name="Ding L."/>
            <person name="Meyer R."/>
            <person name="Sabo A."/>
            <person name="Shotland Y."/>
            <person name="Sinha P."/>
            <person name="Wohldmann P.E."/>
            <person name="Cook L.L."/>
            <person name="Hickenbotham M.T."/>
            <person name="Eldred J."/>
            <person name="Williams D."/>
            <person name="Jones T.A."/>
            <person name="She X."/>
            <person name="Ciccarelli F.D."/>
            <person name="Izaurralde E."/>
            <person name="Taylor J."/>
            <person name="Schmutz J."/>
            <person name="Myers R.M."/>
            <person name="Cox D.R."/>
            <person name="Huang X."/>
            <person name="McPherson J.D."/>
            <person name="Mardis E.R."/>
            <person name="Clifton S.W."/>
            <person name="Warren W.C."/>
            <person name="Chinwalla A.T."/>
            <person name="Eddy S.R."/>
            <person name="Marra M.A."/>
            <person name="Ovcharenko I."/>
            <person name="Furey T.S."/>
            <person name="Miller W."/>
            <person name="Eichler E.E."/>
            <person name="Bork P."/>
            <person name="Suyama M."/>
            <person name="Torrents D."/>
            <person name="Waterston R.H."/>
            <person name="Wilson R.K."/>
        </authorList>
    </citation>
    <scope>NUCLEOTIDE SEQUENCE [LARGE SCALE GENOMIC DNA]</scope>
</reference>
<reference key="3">
    <citation type="submission" date="2005-07" db="EMBL/GenBank/DDBJ databases">
        <authorList>
            <person name="Mural R.J."/>
            <person name="Istrail S."/>
            <person name="Sutton G.G."/>
            <person name="Florea L."/>
            <person name="Halpern A.L."/>
            <person name="Mobarry C.M."/>
            <person name="Lippert R."/>
            <person name="Walenz B."/>
            <person name="Shatkay H."/>
            <person name="Dew I."/>
            <person name="Miller J.R."/>
            <person name="Flanigan M.J."/>
            <person name="Edwards N.J."/>
            <person name="Bolanos R."/>
            <person name="Fasulo D."/>
            <person name="Halldorsson B.V."/>
            <person name="Hannenhalli S."/>
            <person name="Turner R."/>
            <person name="Yooseph S."/>
            <person name="Lu F."/>
            <person name="Nusskern D.R."/>
            <person name="Shue B.C."/>
            <person name="Zheng X.H."/>
            <person name="Zhong F."/>
            <person name="Delcher A.L."/>
            <person name="Huson D.H."/>
            <person name="Kravitz S.A."/>
            <person name="Mouchard L."/>
            <person name="Reinert K."/>
            <person name="Remington K.A."/>
            <person name="Clark A.G."/>
            <person name="Waterman M.S."/>
            <person name="Eichler E.E."/>
            <person name="Adams M.D."/>
            <person name="Hunkapiller M.W."/>
            <person name="Myers E.W."/>
            <person name="Venter J.C."/>
        </authorList>
    </citation>
    <scope>NUCLEOTIDE SEQUENCE [LARGE SCALE GENOMIC DNA]</scope>
</reference>
<reference key="4">
    <citation type="journal article" date="2004" name="Genome Res.">
        <title>The status, quality, and expansion of the NIH full-length cDNA project: the Mammalian Gene Collection (MGC).</title>
        <authorList>
            <consortium name="The MGC Project Team"/>
        </authorList>
    </citation>
    <scope>NUCLEOTIDE SEQUENCE [LARGE SCALE MRNA]</scope>
    <scope>VARIANT LEU-4</scope>
</reference>
<dbReference type="EC" id="2.8.2.-"/>
<dbReference type="EMBL" id="AB040610">
    <property type="protein sequence ID" value="BAB16844.1"/>
    <property type="molecule type" value="mRNA"/>
</dbReference>
<dbReference type="EMBL" id="AC114730">
    <property type="protein sequence ID" value="AAX82021.1"/>
    <property type="molecule type" value="Genomic_DNA"/>
</dbReference>
<dbReference type="EMBL" id="CH471063">
    <property type="protein sequence ID" value="EAW71293.1"/>
    <property type="molecule type" value="Genomic_DNA"/>
</dbReference>
<dbReference type="EMBL" id="BC117293">
    <property type="protein sequence ID" value="AAI17294.1"/>
    <property type="molecule type" value="mRNA"/>
</dbReference>
<dbReference type="EMBL" id="BC117295">
    <property type="protein sequence ID" value="AAI17296.1"/>
    <property type="molecule type" value="mRNA"/>
</dbReference>
<dbReference type="CCDS" id="CCDS33427.1"/>
<dbReference type="RefSeq" id="NP_071417.2">
    <property type="nucleotide sequence ID" value="NM_022134.3"/>
</dbReference>
<dbReference type="BioGRID" id="122052">
    <property type="interactions" value="142"/>
</dbReference>
<dbReference type="FunCoup" id="Q9H3Q3">
    <property type="interactions" value="127"/>
</dbReference>
<dbReference type="IntAct" id="Q9H3Q3">
    <property type="interactions" value="14"/>
</dbReference>
<dbReference type="STRING" id="9606.ENSP00000192314"/>
<dbReference type="GlyCosmos" id="Q9H3Q3">
    <property type="glycosylation" value="6 sites, No reported glycans"/>
</dbReference>
<dbReference type="GlyGen" id="Q9H3Q3">
    <property type="glycosylation" value="6 sites, 4 N-linked glycans (1 site)"/>
</dbReference>
<dbReference type="iPTMnet" id="Q9H3Q3"/>
<dbReference type="PhosphoSitePlus" id="Q9H3Q3"/>
<dbReference type="BioMuta" id="GAL3ST2"/>
<dbReference type="DMDM" id="212276434"/>
<dbReference type="jPOST" id="Q9H3Q3"/>
<dbReference type="MassIVE" id="Q9H3Q3"/>
<dbReference type="PaxDb" id="9606-ENSP00000192314"/>
<dbReference type="PeptideAtlas" id="Q9H3Q3"/>
<dbReference type="ProteomicsDB" id="80740"/>
<dbReference type="Antibodypedia" id="53483">
    <property type="antibodies" value="6 antibodies from 6 providers"/>
</dbReference>
<dbReference type="DNASU" id="64090"/>
<dbReference type="Ensembl" id="ENST00000192314.7">
    <property type="protein sequence ID" value="ENSP00000192314.6"/>
    <property type="gene ID" value="ENSG00000154252.12"/>
</dbReference>
<dbReference type="GeneID" id="64090"/>
<dbReference type="KEGG" id="hsa:64090"/>
<dbReference type="MANE-Select" id="ENST00000192314.7">
    <property type="protein sequence ID" value="ENSP00000192314.6"/>
    <property type="RefSeq nucleotide sequence ID" value="NM_022134.3"/>
    <property type="RefSeq protein sequence ID" value="NP_071417.2"/>
</dbReference>
<dbReference type="UCSC" id="uc002wcj.2">
    <property type="organism name" value="human"/>
</dbReference>
<dbReference type="AGR" id="HGNC:24869"/>
<dbReference type="CTD" id="64090"/>
<dbReference type="DisGeNET" id="64090"/>
<dbReference type="GeneCards" id="GAL3ST2"/>
<dbReference type="HGNC" id="HGNC:24869">
    <property type="gene designation" value="GAL3ST2"/>
</dbReference>
<dbReference type="HPA" id="ENSG00000154252">
    <property type="expression patterns" value="Tissue enriched (intestine)"/>
</dbReference>
<dbReference type="MIM" id="608237">
    <property type="type" value="gene"/>
</dbReference>
<dbReference type="neXtProt" id="NX_Q9H3Q3"/>
<dbReference type="OpenTargets" id="ENSG00000154252"/>
<dbReference type="PharmGKB" id="PA134913637"/>
<dbReference type="VEuPathDB" id="HostDB:ENSG00000154252"/>
<dbReference type="eggNOG" id="ENOG502QSHR">
    <property type="taxonomic scope" value="Eukaryota"/>
</dbReference>
<dbReference type="GeneTree" id="ENSGT00950000182923"/>
<dbReference type="HOGENOM" id="CLU_040616_1_1_1"/>
<dbReference type="InParanoid" id="Q9H3Q3"/>
<dbReference type="OMA" id="MFRFAER"/>
<dbReference type="OrthoDB" id="514299at2759"/>
<dbReference type="PAN-GO" id="Q9H3Q3">
    <property type="GO annotations" value="2 GO annotations based on evolutionary models"/>
</dbReference>
<dbReference type="PhylomeDB" id="Q9H3Q3"/>
<dbReference type="TreeFam" id="TF314802"/>
<dbReference type="PathwayCommons" id="Q9H3Q3"/>
<dbReference type="SignaLink" id="Q9H3Q3"/>
<dbReference type="UniPathway" id="UPA00353"/>
<dbReference type="BioGRID-ORCS" id="64090">
    <property type="hits" value="13 hits in 1146 CRISPR screens"/>
</dbReference>
<dbReference type="ChiTaRS" id="GAL3ST2">
    <property type="organism name" value="human"/>
</dbReference>
<dbReference type="GeneWiki" id="GAL3ST2"/>
<dbReference type="GenomeRNAi" id="64090"/>
<dbReference type="Pharos" id="Q9H3Q3">
    <property type="development level" value="Tdark"/>
</dbReference>
<dbReference type="PRO" id="PR:Q9H3Q3"/>
<dbReference type="Proteomes" id="UP000005640">
    <property type="component" value="Chromosome 2"/>
</dbReference>
<dbReference type="RNAct" id="Q9H3Q3">
    <property type="molecule type" value="protein"/>
</dbReference>
<dbReference type="Bgee" id="ENSG00000154252">
    <property type="expression patterns" value="Expressed in olfactory segment of nasal mucosa and 69 other cell types or tissues"/>
</dbReference>
<dbReference type="GO" id="GO:0032580">
    <property type="term" value="C:Golgi cisterna membrane"/>
    <property type="evidence" value="ECO:0007669"/>
    <property type="project" value="UniProtKB-SubCell"/>
</dbReference>
<dbReference type="GO" id="GO:0016020">
    <property type="term" value="C:membrane"/>
    <property type="evidence" value="ECO:0000304"/>
    <property type="project" value="UniProtKB"/>
</dbReference>
<dbReference type="GO" id="GO:0050694">
    <property type="term" value="F:galactose 3-O-sulfotransferase activity"/>
    <property type="evidence" value="ECO:0000318"/>
    <property type="project" value="GO_Central"/>
</dbReference>
<dbReference type="GO" id="GO:0001733">
    <property type="term" value="F:galactosylceramide sulfotransferase activity"/>
    <property type="evidence" value="ECO:0007669"/>
    <property type="project" value="InterPro"/>
</dbReference>
<dbReference type="GO" id="GO:0008146">
    <property type="term" value="F:sulfotransferase activity"/>
    <property type="evidence" value="ECO:0000314"/>
    <property type="project" value="UniProtKB"/>
</dbReference>
<dbReference type="GO" id="GO:0009247">
    <property type="term" value="P:glycolipid biosynthetic process"/>
    <property type="evidence" value="ECO:0007669"/>
    <property type="project" value="InterPro"/>
</dbReference>
<dbReference type="GO" id="GO:0009101">
    <property type="term" value="P:glycoprotein biosynthetic process"/>
    <property type="evidence" value="ECO:0000318"/>
    <property type="project" value="GO_Central"/>
</dbReference>
<dbReference type="FunFam" id="3.40.50.300:FF:000807">
    <property type="entry name" value="galactosylceramide sulfotransferase isoform X1"/>
    <property type="match status" value="1"/>
</dbReference>
<dbReference type="Gene3D" id="3.40.50.300">
    <property type="entry name" value="P-loop containing nucleotide triphosphate hydrolases"/>
    <property type="match status" value="1"/>
</dbReference>
<dbReference type="InterPro" id="IPR009729">
    <property type="entry name" value="Gal-3-0_sulfotransfrase"/>
</dbReference>
<dbReference type="InterPro" id="IPR027417">
    <property type="entry name" value="P-loop_NTPase"/>
</dbReference>
<dbReference type="PANTHER" id="PTHR14647">
    <property type="entry name" value="GALACTOSE-3-O-SULFOTRANSFERASE"/>
    <property type="match status" value="1"/>
</dbReference>
<dbReference type="PANTHER" id="PTHR14647:SF55">
    <property type="entry name" value="GALACTOSE-3-O-SULFOTRANSFERASE 2"/>
    <property type="match status" value="1"/>
</dbReference>
<dbReference type="Pfam" id="PF06990">
    <property type="entry name" value="Gal-3-0_sulfotr"/>
    <property type="match status" value="1"/>
</dbReference>
<dbReference type="SUPFAM" id="SSF52540">
    <property type="entry name" value="P-loop containing nucleoside triphosphate hydrolases"/>
    <property type="match status" value="1"/>
</dbReference>
<sequence length="398" mass="46110">MMSMLGGLQRYFRVILLLLLALTLLLLAGFLHSDLELDTPLFGGQAEGPPVTNIMFLKTHKTASSTVLNILYRFAETHNLSVALPAGSRVHLGYPWLFLARYVEGVGSQQRFNIMCNHLRFNLPQVQKVMPNDTFYFSILRNPVFQLESSFIYYKTYAPAFRGAPSLDAFLASPRTFYNDSRHLRNVYAKNNMWFDFGFDPNAQCEEGYVRARIAEVERRFRLVLIAEHLDESLVLLRRRLRWALDDVVAFRLNSRSARSVARLSPETRERARSWCALDWRLYEHFNRTLWAQLRAELGPRRLRGEVERLRARRRELASLCLQDGGALKNHTQIRDPRLRPYQSGKADILGYNLRPGLDNQTLGVCQRLVMPELQYMARLYALQFPEKPLKNIPFLGA</sequence>
<name>G3ST2_HUMAN</name>
<accession>Q9H3Q3</accession>
<accession>Q17RK0</accession>
<accession>Q57Z52</accession>